<evidence type="ECO:0000255" key="1"/>
<evidence type="ECO:0000269" key="2">
    <source>
    </source>
</evidence>
<evidence type="ECO:0000269" key="3">
    <source>
    </source>
</evidence>
<evidence type="ECO:0000269" key="4">
    <source>
    </source>
</evidence>
<evidence type="ECO:0000269" key="5">
    <source>
    </source>
</evidence>
<evidence type="ECO:0000269" key="6">
    <source>
    </source>
</evidence>
<evidence type="ECO:0000305" key="7"/>
<keyword id="KW-0472">Membrane</keyword>
<keyword id="KW-0534">Nitrate assimilation</keyword>
<keyword id="KW-1185">Reference proteome</keyword>
<keyword id="KW-0812">Transmembrane</keyword>
<keyword id="KW-1133">Transmembrane helix</keyword>
<dbReference type="EMBL" id="AF019749">
    <property type="protein sequence ID" value="AAC35884.1"/>
    <property type="molecule type" value="mRNA"/>
</dbReference>
<dbReference type="EMBL" id="AC026875">
    <property type="protein sequence ID" value="AAF79836.1"/>
    <property type="molecule type" value="Genomic_DNA"/>
</dbReference>
<dbReference type="EMBL" id="CP002684">
    <property type="protein sequence ID" value="AEE28242.1"/>
    <property type="molecule type" value="Genomic_DNA"/>
</dbReference>
<dbReference type="PIR" id="F86215">
    <property type="entry name" value="F86215"/>
</dbReference>
<dbReference type="RefSeq" id="NP_172289.1">
    <property type="nucleotide sequence ID" value="NM_100685.1"/>
</dbReference>
<dbReference type="BioGRID" id="22569">
    <property type="interactions" value="1"/>
</dbReference>
<dbReference type="FunCoup" id="Q9LMZ9">
    <property type="interactions" value="466"/>
</dbReference>
<dbReference type="STRING" id="3702.Q9LMZ9"/>
<dbReference type="PaxDb" id="3702-AT1G08100.1"/>
<dbReference type="EnsemblPlants" id="AT1G08100.1">
    <property type="protein sequence ID" value="AT1G08100.1"/>
    <property type="gene ID" value="AT1G08100"/>
</dbReference>
<dbReference type="GeneID" id="837328"/>
<dbReference type="Gramene" id="AT1G08100.1">
    <property type="protein sequence ID" value="AT1G08100.1"/>
    <property type="gene ID" value="AT1G08100"/>
</dbReference>
<dbReference type="KEGG" id="ath:AT1G08100"/>
<dbReference type="Araport" id="AT1G08100"/>
<dbReference type="TAIR" id="AT1G08100">
    <property type="gene designation" value="NRT2.2"/>
</dbReference>
<dbReference type="eggNOG" id="ENOG502QPIC">
    <property type="taxonomic scope" value="Eukaryota"/>
</dbReference>
<dbReference type="HOGENOM" id="CLU_024204_0_0_1"/>
<dbReference type="InParanoid" id="Q9LMZ9"/>
<dbReference type="OMA" id="WSHEEKS"/>
<dbReference type="OrthoDB" id="434240at2759"/>
<dbReference type="PhylomeDB" id="Q9LMZ9"/>
<dbReference type="PRO" id="PR:Q9LMZ9"/>
<dbReference type="Proteomes" id="UP000006548">
    <property type="component" value="Chromosome 1"/>
</dbReference>
<dbReference type="ExpressionAtlas" id="Q9LMZ9">
    <property type="expression patterns" value="baseline and differential"/>
</dbReference>
<dbReference type="GO" id="GO:0016020">
    <property type="term" value="C:membrane"/>
    <property type="evidence" value="ECO:0007669"/>
    <property type="project" value="UniProtKB-SubCell"/>
</dbReference>
<dbReference type="GO" id="GO:0015112">
    <property type="term" value="F:nitrate transmembrane transporter activity"/>
    <property type="evidence" value="ECO:0007669"/>
    <property type="project" value="InterPro"/>
</dbReference>
<dbReference type="GO" id="GO:0048527">
    <property type="term" value="P:lateral root development"/>
    <property type="evidence" value="ECO:0000315"/>
    <property type="project" value="TAIR"/>
</dbReference>
<dbReference type="GO" id="GO:0042128">
    <property type="term" value="P:nitrate assimilation"/>
    <property type="evidence" value="ECO:0007669"/>
    <property type="project" value="UniProtKB-KW"/>
</dbReference>
<dbReference type="GO" id="GO:0015706">
    <property type="term" value="P:nitrate transmembrane transport"/>
    <property type="evidence" value="ECO:0000315"/>
    <property type="project" value="TAIR"/>
</dbReference>
<dbReference type="CDD" id="cd17341">
    <property type="entry name" value="MFS_NRT2_like"/>
    <property type="match status" value="1"/>
</dbReference>
<dbReference type="FunFam" id="1.20.1250.20:FF:000048">
    <property type="entry name" value="High affinity nitrate transporter"/>
    <property type="match status" value="1"/>
</dbReference>
<dbReference type="FunFam" id="1.20.1250.20:FF:000053">
    <property type="entry name" value="Nitrate transporter 2.1"/>
    <property type="match status" value="1"/>
</dbReference>
<dbReference type="Gene3D" id="1.20.1250.20">
    <property type="entry name" value="MFS general substrate transporter like domains"/>
    <property type="match status" value="2"/>
</dbReference>
<dbReference type="InterPro" id="IPR011701">
    <property type="entry name" value="MFS"/>
</dbReference>
<dbReference type="InterPro" id="IPR036259">
    <property type="entry name" value="MFS_trans_sf"/>
</dbReference>
<dbReference type="InterPro" id="IPR044772">
    <property type="entry name" value="NO3_transporter"/>
</dbReference>
<dbReference type="PANTHER" id="PTHR23515">
    <property type="entry name" value="HIGH-AFFINITY NITRATE TRANSPORTER 2.3"/>
    <property type="match status" value="1"/>
</dbReference>
<dbReference type="Pfam" id="PF07690">
    <property type="entry name" value="MFS_1"/>
    <property type="match status" value="1"/>
</dbReference>
<dbReference type="SUPFAM" id="SSF103473">
    <property type="entry name" value="MFS general substrate transporter"/>
    <property type="match status" value="1"/>
</dbReference>
<protein>
    <recommendedName>
        <fullName>High-affinity nitrate transporter 2.2</fullName>
        <shortName>AtNRT2:2</shortName>
    </recommendedName>
</protein>
<proteinExistence type="evidence at transcript level"/>
<accession>Q9LMZ9</accession>
<accession>O82412</accession>
<reference key="1">
    <citation type="journal article" date="1999" name="Plant J.">
        <title>Regulation of a putative high-affinity nitrate transporter (Nrt2;1At) in roots of Arabidopsis thaliana.</title>
        <authorList>
            <person name="Zhuo D."/>
            <person name="Okamoto M."/>
            <person name="Vidmar J.J."/>
            <person name="Glass A.D."/>
        </authorList>
    </citation>
    <scope>NUCLEOTIDE SEQUENCE [MRNA]</scope>
    <scope>INDUCTION BY NITRATE</scope>
    <scope>TISSUE SPECIFICITY</scope>
</reference>
<reference key="2">
    <citation type="journal article" date="2000" name="Nature">
        <title>Sequence and analysis of chromosome 1 of the plant Arabidopsis thaliana.</title>
        <authorList>
            <person name="Theologis A."/>
            <person name="Ecker J.R."/>
            <person name="Palm C.J."/>
            <person name="Federspiel N.A."/>
            <person name="Kaul S."/>
            <person name="White O."/>
            <person name="Alonso J."/>
            <person name="Altafi H."/>
            <person name="Araujo R."/>
            <person name="Bowman C.L."/>
            <person name="Brooks S.Y."/>
            <person name="Buehler E."/>
            <person name="Chan A."/>
            <person name="Chao Q."/>
            <person name="Chen H."/>
            <person name="Cheuk R.F."/>
            <person name="Chin C.W."/>
            <person name="Chung M.K."/>
            <person name="Conn L."/>
            <person name="Conway A.B."/>
            <person name="Conway A.R."/>
            <person name="Creasy T.H."/>
            <person name="Dewar K."/>
            <person name="Dunn P."/>
            <person name="Etgu P."/>
            <person name="Feldblyum T.V."/>
            <person name="Feng J.-D."/>
            <person name="Fong B."/>
            <person name="Fujii C.Y."/>
            <person name="Gill J.E."/>
            <person name="Goldsmith A.D."/>
            <person name="Haas B."/>
            <person name="Hansen N.F."/>
            <person name="Hughes B."/>
            <person name="Huizar L."/>
            <person name="Hunter J.L."/>
            <person name="Jenkins J."/>
            <person name="Johnson-Hopson C."/>
            <person name="Khan S."/>
            <person name="Khaykin E."/>
            <person name="Kim C.J."/>
            <person name="Koo H.L."/>
            <person name="Kremenetskaia I."/>
            <person name="Kurtz D.B."/>
            <person name="Kwan A."/>
            <person name="Lam B."/>
            <person name="Langin-Hooper S."/>
            <person name="Lee A."/>
            <person name="Lee J.M."/>
            <person name="Lenz C.A."/>
            <person name="Li J.H."/>
            <person name="Li Y.-P."/>
            <person name="Lin X."/>
            <person name="Liu S.X."/>
            <person name="Liu Z.A."/>
            <person name="Luros J.S."/>
            <person name="Maiti R."/>
            <person name="Marziali A."/>
            <person name="Militscher J."/>
            <person name="Miranda M."/>
            <person name="Nguyen M."/>
            <person name="Nierman W.C."/>
            <person name="Osborne B.I."/>
            <person name="Pai G."/>
            <person name="Peterson J."/>
            <person name="Pham P.K."/>
            <person name="Rizzo M."/>
            <person name="Rooney T."/>
            <person name="Rowley D."/>
            <person name="Sakano H."/>
            <person name="Salzberg S.L."/>
            <person name="Schwartz J.R."/>
            <person name="Shinn P."/>
            <person name="Southwick A.M."/>
            <person name="Sun H."/>
            <person name="Tallon L.J."/>
            <person name="Tambunga G."/>
            <person name="Toriumi M.J."/>
            <person name="Town C.D."/>
            <person name="Utterback T."/>
            <person name="Van Aken S."/>
            <person name="Vaysberg M."/>
            <person name="Vysotskaia V.S."/>
            <person name="Walker M."/>
            <person name="Wu D."/>
            <person name="Yu G."/>
            <person name="Fraser C.M."/>
            <person name="Venter J.C."/>
            <person name="Davis R.W."/>
        </authorList>
    </citation>
    <scope>NUCLEOTIDE SEQUENCE [LARGE SCALE GENOMIC DNA]</scope>
    <source>
        <strain>cv. Columbia</strain>
    </source>
</reference>
<reference key="3">
    <citation type="journal article" date="2017" name="Plant J.">
        <title>Araport11: a complete reannotation of the Arabidopsis thaliana reference genome.</title>
        <authorList>
            <person name="Cheng C.Y."/>
            <person name="Krishnakumar V."/>
            <person name="Chan A.P."/>
            <person name="Thibaud-Nissen F."/>
            <person name="Schobel S."/>
            <person name="Town C.D."/>
        </authorList>
    </citation>
    <scope>GENOME REANNOTATION</scope>
    <source>
        <strain>cv. Columbia</strain>
    </source>
</reference>
<reference key="4">
    <citation type="journal article" date="2001" name="Plant Physiol.">
        <title>Major alterations of the regulation of root NO(3)(-) uptake are associated with the mutation of Nrt2.1 and Nrt2.2 genes in Arabidopsis.</title>
        <authorList>
            <person name="Cerezo M."/>
            <person name="Tillard P."/>
            <person name="Filleur S."/>
            <person name="Munos S."/>
            <person name="Daniel-Vedele F."/>
            <person name="Gojon A."/>
        </authorList>
    </citation>
    <scope>FUNCTION</scope>
    <scope>INDUCTION BY NITRATE</scope>
</reference>
<reference key="5">
    <citation type="journal article" date="2002" name="J. Exp. Bot.">
        <title>Nitrate transport in plants: which gene and which control?</title>
        <authorList>
            <person name="Orsel M."/>
            <person name="Filleur S."/>
            <person name="Fraisier V."/>
            <person name="Daniel-Vedele F."/>
        </authorList>
    </citation>
    <scope>GENE FAMILY</scope>
</reference>
<reference key="6">
    <citation type="journal article" date="2003" name="Plant Cell Physiol.">
        <title>Regulation of NRT1 and NRT2 gene families of Arabidopsis thaliana: responses to nitrate provision.</title>
        <authorList>
            <person name="Okamoto M."/>
            <person name="Vidmar J.J."/>
            <person name="Glass A.D."/>
        </authorList>
    </citation>
    <scope>INDUCTION BY NITRATE</scope>
    <scope>TISSUE SPECIFICITY</scope>
    <scope>GENE FAMILY</scope>
</reference>
<reference key="7">
    <citation type="journal article" date="2004" name="Planta">
        <title>Disruption of the nitrate transporter genes AtNRT2.1 and AtNRT2.2 restricts growth at low external nitrate concentration.</title>
        <authorList>
            <person name="Orsel M."/>
            <person name="Eulenburg K."/>
            <person name="Krapp A."/>
            <person name="Daniel-Vedele F."/>
        </authorList>
    </citation>
    <scope>FUNCTION</scope>
    <scope>INDUCTION BY NITRATE</scope>
</reference>
<reference key="8">
    <citation type="journal article" date="2007" name="FEBS Lett.">
        <title>Nitrate transporters and peptide transporters.</title>
        <authorList>
            <person name="Tsay Y.F."/>
            <person name="Chiu C.C."/>
            <person name="Tsai C.B."/>
            <person name="Ho C.H."/>
            <person name="Hsu P.K."/>
        </authorList>
    </citation>
    <scope>GENE FAMILY</scope>
</reference>
<reference key="9">
    <citation type="journal article" date="2007" name="Plant Physiol.">
        <title>Dissection of the AtNRT2.1:AtNRT2.2 inducible high-affinity nitrate transporter gene cluster.</title>
        <authorList>
            <person name="Li W."/>
            <person name="Wang Y."/>
            <person name="Okamoto M."/>
            <person name="Crawford N.M."/>
            <person name="Siddiqi M.Y."/>
            <person name="Glass A.D."/>
        </authorList>
    </citation>
    <scope>FUNCTION</scope>
    <scope>DISRUPTION PHENOTYPE</scope>
</reference>
<name>NRT22_ARATH</name>
<organism>
    <name type="scientific">Arabidopsis thaliana</name>
    <name type="common">Mouse-ear cress</name>
    <dbReference type="NCBI Taxonomy" id="3702"/>
    <lineage>
        <taxon>Eukaryota</taxon>
        <taxon>Viridiplantae</taxon>
        <taxon>Streptophyta</taxon>
        <taxon>Embryophyta</taxon>
        <taxon>Tracheophyta</taxon>
        <taxon>Spermatophyta</taxon>
        <taxon>Magnoliopsida</taxon>
        <taxon>eudicotyledons</taxon>
        <taxon>Gunneridae</taxon>
        <taxon>Pentapetalae</taxon>
        <taxon>rosids</taxon>
        <taxon>malvids</taxon>
        <taxon>Brassicales</taxon>
        <taxon>Brassicaceae</taxon>
        <taxon>Camelineae</taxon>
        <taxon>Arabidopsis</taxon>
    </lineage>
</organism>
<sequence>MGSTDEPGSSMHGVTGREQSYAFSVDGSEPTNTKKKYNLPVDAEDKATVFKLFSFAKPHMRTFHLSWISFSTCFVSTFAAAPLIPIIRENLNLTKHDIGNAGVASVSGSIFSRLVMGAVCDLLGPRYGCAFLVMLSAPTVFSMSFVSDAAGFITVRFMIGFCLATFVSCQYWMSTMFNSQIIGLVNGTAAGWGNMGGGITQLLMPIVYEIIRRCGSTAFTAWRIAFFVPGWLHIIMGILVLTLGQDLPGGNRAAMEKAGEVAKDKFGKILWYAVTNYRTWIFVLLYGYSMGVELSTDNVIAEYFFDRFHLKLHTAGIIAACFGMANFFARPAGGWASDIAAKRFGMRGRLWTLWIIQTSGGLFCVWLGRANTLVTAVVSMVLFSLGAQAACGATFAIVPFVSRRALGIISGLTGAGGNFGSGLTQLVFFSTSRFTTEEGLTWMGVMIVACTLPVTLIHFPQWGSMFFPPSNDSVDATEHYYVGEYSKEEQQIGMHLKSKLFADGAKTEGGSSVHKGNATNNA</sequence>
<gene>
    <name type="primary">NRT2.2</name>
    <name type="synonym">ACH2</name>
    <name type="synonym">NRT2;2AT</name>
    <name type="ordered locus">At1g08100</name>
    <name type="ORF">T6D22.18</name>
</gene>
<feature type="chain" id="PRO_0000400099" description="High-affinity nitrate transporter 2.2">
    <location>
        <begin position="1"/>
        <end position="522"/>
    </location>
</feature>
<feature type="transmembrane region" description="Helical" evidence="1">
    <location>
        <begin position="67"/>
        <end position="87"/>
    </location>
</feature>
<feature type="transmembrane region" description="Helical" evidence="1">
    <location>
        <begin position="103"/>
        <end position="123"/>
    </location>
</feature>
<feature type="transmembrane region" description="Helical" evidence="1">
    <location>
        <begin position="127"/>
        <end position="147"/>
    </location>
</feature>
<feature type="transmembrane region" description="Helical" evidence="1">
    <location>
        <begin position="149"/>
        <end position="169"/>
    </location>
</feature>
<feature type="transmembrane region" description="Helical" evidence="1">
    <location>
        <begin position="191"/>
        <end position="211"/>
    </location>
</feature>
<feature type="transmembrane region" description="Helical" evidence="1">
    <location>
        <begin position="224"/>
        <end position="244"/>
    </location>
</feature>
<feature type="transmembrane region" description="Helical" evidence="1">
    <location>
        <begin position="269"/>
        <end position="288"/>
    </location>
</feature>
<feature type="transmembrane region" description="Helical" evidence="1">
    <location>
        <begin position="308"/>
        <end position="328"/>
    </location>
</feature>
<feature type="transmembrane region" description="Helical" evidence="1">
    <location>
        <begin position="350"/>
        <end position="370"/>
    </location>
</feature>
<feature type="transmembrane region" description="Helical" evidence="1">
    <location>
        <begin position="381"/>
        <end position="401"/>
    </location>
</feature>
<feature type="transmembrane region" description="Helical" evidence="1">
    <location>
        <begin position="408"/>
        <end position="428"/>
    </location>
</feature>
<feature type="transmembrane region" description="Helical" evidence="1">
    <location>
        <begin position="439"/>
        <end position="459"/>
    </location>
</feature>
<feature type="sequence conflict" description="In Ref. 1; AAC35884." evidence="7" ref="1">
    <original>G</original>
    <variation>R</variation>
    <location>
        <position position="8"/>
    </location>
</feature>
<comment type="function">
    <text evidence="3 5 6">Involved in high-affinity nitrate transport.</text>
</comment>
<comment type="subcellular location">
    <subcellularLocation>
        <location evidence="7">Membrane</location>
        <topology evidence="7">Multi-pass membrane protein</topology>
    </subcellularLocation>
</comment>
<comment type="tissue specificity">
    <text evidence="2 4">Expressed in roots and shoots.</text>
</comment>
<comment type="induction">
    <text evidence="2 3 4 5">Transient up-regulation at transcript level by nitrate. No induction by growth on low nitrate concentration.</text>
</comment>
<comment type="disruption phenotype">
    <text evidence="6">No visible phenotype.</text>
</comment>
<comment type="similarity">
    <text evidence="7">Belongs to the major facilitator superfamily. Nitrate/nitrite porter (TC 2.A.1.8) family.</text>
</comment>